<sequence>METRALWLMLLVVLVAGSSGIAADYVGLSPSQCMVPANVRVDCGYPSVTSEQCNNRGCCFDSSIPNVPWCFKPLQETECTF</sequence>
<evidence type="ECO:0000250" key="1"/>
<evidence type="ECO:0000250" key="2">
    <source>
        <dbReference type="UniProtKB" id="Q07654"/>
    </source>
</evidence>
<evidence type="ECO:0000255" key="3"/>
<evidence type="ECO:0000255" key="4">
    <source>
        <dbReference type="PROSITE-ProRule" id="PRU00779"/>
    </source>
</evidence>
<evidence type="ECO:0000269" key="5">
    <source>
    </source>
</evidence>
<evidence type="ECO:0000269" key="6">
    <source>
    </source>
</evidence>
<evidence type="ECO:0000269" key="7">
    <source>
    </source>
</evidence>
<proteinExistence type="evidence at protein level"/>
<reference key="1">
    <citation type="journal article" date="1995" name="Biochem. Biophys. Res. Commun.">
        <title>Structure and expression of murine intestinal trefoil factor: high evolutionary conservation and postnatal expression.</title>
        <authorList>
            <person name="Mashimo H."/>
            <person name="Podolsky D.K."/>
            <person name="Fishman M.C."/>
        </authorList>
    </citation>
    <scope>NUCLEOTIDE SEQUENCE [GENOMIC DNA]</scope>
    <scope>DEVELOPMENTAL STAGE</scope>
    <scope>TISSUE SPECIFICITY</scope>
    <source>
        <strain>129/Sv</strain>
        <tissue>Liver</tissue>
    </source>
</reference>
<reference key="2">
    <citation type="journal article" date="1995" name="Biochem. J.">
        <title>Molecular cloning of mouse intestinal trefoil factor and its expression during goblet cell changes.</title>
        <authorList>
            <person name="Tomita M."/>
            <person name="Itoh H."/>
            <person name="Ishikawa N."/>
            <person name="Higa A."/>
            <person name="Ide H."/>
            <person name="Murakumo Y."/>
            <person name="Maruyama H."/>
            <person name="Koga Y."/>
            <person name="Nawa Y."/>
        </authorList>
    </citation>
    <scope>NUCLEOTIDE SEQUENCE [MRNA]</scope>
    <scope>TISSUE SPECIFICITY</scope>
    <source>
        <strain>C57BL/6J</strain>
        <tissue>Small intestine</tissue>
    </source>
</reference>
<reference key="3">
    <citation type="journal article" date="2001" name="Gene">
        <title>Mouse trefoil factor genes: genomic organization, sequences and methylation analyses.</title>
        <authorList>
            <person name="Ribieras S."/>
            <person name="Lefebvre O."/>
            <person name="Tomasetto C."/>
            <person name="Rio M.C."/>
        </authorList>
    </citation>
    <scope>NUCLEOTIDE SEQUENCE [GENOMIC DNA]</scope>
</reference>
<reference key="4">
    <citation type="journal article" date="2004" name="Genome Res.">
        <title>The status, quality, and expansion of the NIH full-length cDNA project: the Mammalian Gene Collection (MGC).</title>
        <authorList>
            <consortium name="The MGC Project Team"/>
        </authorList>
    </citation>
    <scope>NUCLEOTIDE SEQUENCE [LARGE SCALE MRNA]</scope>
    <source>
        <strain>FVB/N</strain>
        <tissue>Colon</tissue>
    </source>
</reference>
<reference key="5">
    <citation type="journal article" date="1996" name="Gene">
        <title>The gene encoding mouse intestinal trefoil factor: structural organization, partial sequence analysis and mapping to murine chromosome 17q.</title>
        <authorList>
            <person name="Chinery R."/>
            <person name="Poulsom R."/>
            <person name="Cox H.M."/>
        </authorList>
    </citation>
    <scope>NUCLEOTIDE SEQUENCE [GENOMIC DNA] OF 1-77</scope>
</reference>
<reference key="6">
    <citation type="journal article" date="1996" name="Science">
        <title>Impaired defense of intestinal mucosa in mice lacking intestinal trefoil factor.</title>
        <authorList>
            <person name="Mashimo H."/>
            <person name="Wu D.C."/>
            <person name="Podolsky D.K."/>
            <person name="Fishman M.C."/>
        </authorList>
    </citation>
    <scope>FUNCTION</scope>
    <scope>DISRUPTION PHENOTYPE</scope>
</reference>
<protein>
    <recommendedName>
        <fullName>Trefoil factor 3</fullName>
    </recommendedName>
    <alternativeName>
        <fullName>Intestinal trefoil factor</fullName>
        <shortName>mITF</shortName>
    </alternativeName>
</protein>
<name>TFF3_MOUSE</name>
<organism>
    <name type="scientific">Mus musculus</name>
    <name type="common">Mouse</name>
    <dbReference type="NCBI Taxonomy" id="10090"/>
    <lineage>
        <taxon>Eukaryota</taxon>
        <taxon>Metazoa</taxon>
        <taxon>Chordata</taxon>
        <taxon>Craniata</taxon>
        <taxon>Vertebrata</taxon>
        <taxon>Euteleostomi</taxon>
        <taxon>Mammalia</taxon>
        <taxon>Eutheria</taxon>
        <taxon>Euarchontoglires</taxon>
        <taxon>Glires</taxon>
        <taxon>Rodentia</taxon>
        <taxon>Myomorpha</taxon>
        <taxon>Muroidea</taxon>
        <taxon>Muridae</taxon>
        <taxon>Murinae</taxon>
        <taxon>Mus</taxon>
        <taxon>Mus</taxon>
    </lineage>
</organism>
<dbReference type="EMBL" id="U24222">
    <property type="protein sequence ID" value="AAB92385.1"/>
    <property type="molecule type" value="Genomic_DNA"/>
</dbReference>
<dbReference type="EMBL" id="U24220">
    <property type="protein sequence ID" value="AAB92385.1"/>
    <property type="status" value="JOINED"/>
    <property type="molecule type" value="Genomic_DNA"/>
</dbReference>
<dbReference type="EMBL" id="U24221">
    <property type="protein sequence ID" value="AAB92385.1"/>
    <property type="status" value="JOINED"/>
    <property type="molecule type" value="Genomic_DNA"/>
</dbReference>
<dbReference type="EMBL" id="D38410">
    <property type="protein sequence ID" value="BAA07464.1"/>
    <property type="molecule type" value="mRNA"/>
</dbReference>
<dbReference type="EMBL" id="AJ271004">
    <property type="protein sequence ID" value="CAB65752.1"/>
    <property type="molecule type" value="Genomic_DNA"/>
</dbReference>
<dbReference type="EMBL" id="BC011042">
    <property type="protein sequence ID" value="AAH11042.1"/>
    <property type="molecule type" value="mRNA"/>
</dbReference>
<dbReference type="EMBL" id="U46858">
    <property type="protein sequence ID" value="AAC52682.1"/>
    <property type="molecule type" value="Genomic_DNA"/>
</dbReference>
<dbReference type="CCDS" id="CCDS37544.1"/>
<dbReference type="PIR" id="JC4147">
    <property type="entry name" value="JC4147"/>
</dbReference>
<dbReference type="RefSeq" id="NP_035705.1">
    <property type="nucleotide sequence ID" value="NM_011575.2"/>
</dbReference>
<dbReference type="SMR" id="Q62395"/>
<dbReference type="FunCoup" id="Q62395">
    <property type="interactions" value="62"/>
</dbReference>
<dbReference type="STRING" id="10090.ENSMUSP00000024827"/>
<dbReference type="PaxDb" id="10090-ENSMUSP00000024827"/>
<dbReference type="PeptideAtlas" id="Q62395"/>
<dbReference type="ProteomicsDB" id="259018"/>
<dbReference type="DNASU" id="21786"/>
<dbReference type="Ensembl" id="ENSMUST00000024827.5">
    <property type="protein sequence ID" value="ENSMUSP00000024827.5"/>
    <property type="gene ID" value="ENSMUSG00000024029.5"/>
</dbReference>
<dbReference type="GeneID" id="21786"/>
<dbReference type="KEGG" id="mmu:21786"/>
<dbReference type="UCSC" id="uc008buk.2">
    <property type="organism name" value="mouse"/>
</dbReference>
<dbReference type="AGR" id="MGI:104638"/>
<dbReference type="CTD" id="7033"/>
<dbReference type="MGI" id="MGI:104638">
    <property type="gene designation" value="Tff3"/>
</dbReference>
<dbReference type="VEuPathDB" id="HostDB:ENSMUSG00000024029"/>
<dbReference type="eggNOG" id="ENOG502SV7V">
    <property type="taxonomic scope" value="Eukaryota"/>
</dbReference>
<dbReference type="GeneTree" id="ENSGT00940000162416"/>
<dbReference type="HOGENOM" id="CLU_179440_0_0_1"/>
<dbReference type="InParanoid" id="Q62395"/>
<dbReference type="OMA" id="QETECTF"/>
<dbReference type="OrthoDB" id="10051464at2759"/>
<dbReference type="PhylomeDB" id="Q62395"/>
<dbReference type="TreeFam" id="TF336092"/>
<dbReference type="BioGRID-ORCS" id="21786">
    <property type="hits" value="2 hits in 76 CRISPR screens"/>
</dbReference>
<dbReference type="PRO" id="PR:Q62395"/>
<dbReference type="Proteomes" id="UP000000589">
    <property type="component" value="Chromosome 17"/>
</dbReference>
<dbReference type="RNAct" id="Q62395">
    <property type="molecule type" value="protein"/>
</dbReference>
<dbReference type="Bgee" id="ENSMUSG00000024029">
    <property type="expression patterns" value="Expressed in crypt of Lieberkuhn of small intestine and 68 other cell types or tissues"/>
</dbReference>
<dbReference type="GO" id="GO:0005576">
    <property type="term" value="C:extracellular region"/>
    <property type="evidence" value="ECO:0007669"/>
    <property type="project" value="UniProtKB-KW"/>
</dbReference>
<dbReference type="GO" id="GO:0030141">
    <property type="term" value="C:secretory granule"/>
    <property type="evidence" value="ECO:0000314"/>
    <property type="project" value="MGI"/>
</dbReference>
<dbReference type="GO" id="GO:0042802">
    <property type="term" value="F:identical protein binding"/>
    <property type="evidence" value="ECO:0007669"/>
    <property type="project" value="Ensembl"/>
</dbReference>
<dbReference type="GO" id="GO:0010906">
    <property type="term" value="P:regulation of glucose metabolic process"/>
    <property type="evidence" value="ECO:0000314"/>
    <property type="project" value="CACAO"/>
</dbReference>
<dbReference type="CDD" id="cd00111">
    <property type="entry name" value="Trefoil"/>
    <property type="match status" value="1"/>
</dbReference>
<dbReference type="FunFam" id="4.10.110.10:FF:000001">
    <property type="entry name" value="Trefoil factor 3"/>
    <property type="match status" value="1"/>
</dbReference>
<dbReference type="Gene3D" id="4.10.110.10">
    <property type="entry name" value="Spasmolytic Protein, domain 1"/>
    <property type="match status" value="1"/>
</dbReference>
<dbReference type="InterPro" id="IPR017994">
    <property type="entry name" value="P_trefoil_chordata"/>
</dbReference>
<dbReference type="InterPro" id="IPR017957">
    <property type="entry name" value="P_trefoil_CS"/>
</dbReference>
<dbReference type="InterPro" id="IPR000519">
    <property type="entry name" value="P_trefoil_dom"/>
</dbReference>
<dbReference type="InterPro" id="IPR044913">
    <property type="entry name" value="P_trefoil_dom_sf"/>
</dbReference>
<dbReference type="PANTHER" id="PTHR13826">
    <property type="entry name" value="INTESTINAL TREFOIL FACTOR-RELATED"/>
    <property type="match status" value="1"/>
</dbReference>
<dbReference type="PANTHER" id="PTHR13826:SF16">
    <property type="entry name" value="TREFOIL FACTOR 3"/>
    <property type="match status" value="1"/>
</dbReference>
<dbReference type="Pfam" id="PF00088">
    <property type="entry name" value="Trefoil"/>
    <property type="match status" value="1"/>
</dbReference>
<dbReference type="PRINTS" id="PR00680">
    <property type="entry name" value="PTREFOIL"/>
</dbReference>
<dbReference type="SMART" id="SM00018">
    <property type="entry name" value="PD"/>
    <property type="match status" value="1"/>
</dbReference>
<dbReference type="SUPFAM" id="SSF57492">
    <property type="entry name" value="Trefoil"/>
    <property type="match status" value="1"/>
</dbReference>
<dbReference type="PROSITE" id="PS00025">
    <property type="entry name" value="P_TREFOIL_1"/>
    <property type="match status" value="1"/>
</dbReference>
<dbReference type="PROSITE" id="PS51448">
    <property type="entry name" value="P_TREFOIL_2"/>
    <property type="match status" value="1"/>
</dbReference>
<comment type="function">
    <text evidence="7">Involved in the maintenance and repair of the intestinal mucosa. Promotes the mobility of epithelial cells in healing processes (motogen).</text>
</comment>
<comment type="subunit">
    <text evidence="1">Monomer. Homodimer; disulfide-linked.</text>
</comment>
<comment type="subcellular location">
    <subcellularLocation>
        <location evidence="2">Secreted</location>
        <location evidence="2">Extracellular space</location>
        <location evidence="2">Extracellular matrix</location>
    </subcellularLocation>
    <subcellularLocation>
        <location evidence="2">Cytoplasm</location>
    </subcellularLocation>
</comment>
<comment type="tissue specificity">
    <text evidence="5 6">Expressed in goblet cells of the intestines and colon (at protein level). Expressed abundantly in goblet cells of intestine and colon, and at low levels in stomach. No expression in brain, lung, spleen, kidney, uterus, pancreas, liver, heart or thymus.</text>
</comment>
<comment type="developmental stage">
    <text evidence="6">No expression found in embryos.</text>
</comment>
<comment type="disruption phenotype">
    <text evidence="7">Mice lacking this gene show impaired mucosal healing after injury and die from extensive colitis after oral administration of dextran sulfate.</text>
</comment>
<feature type="signal peptide" evidence="3">
    <location>
        <begin position="1"/>
        <end position="22"/>
    </location>
</feature>
<feature type="chain" id="PRO_0000023466" description="Trefoil factor 3">
    <location>
        <begin position="23"/>
        <end position="81"/>
    </location>
</feature>
<feature type="domain" description="P-type" evidence="4">
    <location>
        <begin position="31"/>
        <end position="74"/>
    </location>
</feature>
<feature type="disulfide bond" evidence="4">
    <location>
        <begin position="33"/>
        <end position="59"/>
    </location>
</feature>
<feature type="disulfide bond" evidence="4">
    <location>
        <begin position="43"/>
        <end position="58"/>
    </location>
</feature>
<feature type="disulfide bond" evidence="4">
    <location>
        <begin position="53"/>
        <end position="70"/>
    </location>
</feature>
<feature type="disulfide bond" description="Interchain" evidence="4">
    <location>
        <position position="79"/>
    </location>
</feature>
<accession>Q62395</accession>
<accession>Q64352</accession>
<keyword id="KW-0963">Cytoplasm</keyword>
<keyword id="KW-1015">Disulfide bond</keyword>
<keyword id="KW-0272">Extracellular matrix</keyword>
<keyword id="KW-1185">Reference proteome</keyword>
<keyword id="KW-0964">Secreted</keyword>
<keyword id="KW-0732">Signal</keyword>
<gene>
    <name type="primary">Tff3</name>
    <name type="synonym">Itf</name>
</gene>